<keyword id="KW-0256">Endoplasmic reticulum</keyword>
<keyword id="KW-0413">Isomerase</keyword>
<keyword id="KW-1185">Reference proteome</keyword>
<keyword id="KW-0697">Rotamase</keyword>
<keyword id="KW-0732">Signal</keyword>
<comment type="function">
    <text evidence="1">PPIases accelerate the folding of proteins. It catalyzes the cis-trans isomerization of proline imidic peptide bonds in oligopeptides (By similarity).</text>
</comment>
<comment type="catalytic activity">
    <reaction>
        <text>[protein]-peptidylproline (omega=180) = [protein]-peptidylproline (omega=0)</text>
        <dbReference type="Rhea" id="RHEA:16237"/>
        <dbReference type="Rhea" id="RHEA-COMP:10747"/>
        <dbReference type="Rhea" id="RHEA-COMP:10748"/>
        <dbReference type="ChEBI" id="CHEBI:83833"/>
        <dbReference type="ChEBI" id="CHEBI:83834"/>
        <dbReference type="EC" id="5.2.1.8"/>
    </reaction>
</comment>
<comment type="activity regulation">
    <text evidence="1">Inhibited by both FK506 and rapamycin.</text>
</comment>
<comment type="subcellular location">
    <subcellularLocation>
        <location evidence="1">Endoplasmic reticulum</location>
    </subcellularLocation>
</comment>
<comment type="similarity">
    <text evidence="4">Belongs to the FKBP-type PPIase family. FKBP2 subfamily.</text>
</comment>
<gene>
    <name type="primary">FPR2</name>
    <name type="ordered locus">CNE02370</name>
</gene>
<proteinExistence type="inferred from homology"/>
<protein>
    <recommendedName>
        <fullName>FK506-binding protein 2</fullName>
        <ecNumber>5.2.1.8</ecNumber>
    </recommendedName>
    <alternativeName>
        <fullName>Peptidyl-prolyl cis-trans isomerase</fullName>
        <shortName>PPIase</shortName>
    </alternativeName>
    <alternativeName>
        <fullName>Rotamase</fullName>
    </alternativeName>
</protein>
<organism>
    <name type="scientific">Cryptococcus neoformans var. neoformans serotype D (strain JEC21 / ATCC MYA-565)</name>
    <name type="common">Filobasidiella neoformans</name>
    <dbReference type="NCBI Taxonomy" id="214684"/>
    <lineage>
        <taxon>Eukaryota</taxon>
        <taxon>Fungi</taxon>
        <taxon>Dikarya</taxon>
        <taxon>Basidiomycota</taxon>
        <taxon>Agaricomycotina</taxon>
        <taxon>Tremellomycetes</taxon>
        <taxon>Tremellales</taxon>
        <taxon>Cryptococcaceae</taxon>
        <taxon>Cryptococcus</taxon>
        <taxon>Cryptococcus neoformans species complex</taxon>
    </lineage>
</organism>
<dbReference type="EC" id="5.2.1.8"/>
<dbReference type="EMBL" id="AE017345">
    <property type="protein sequence ID" value="AAW43627.1"/>
    <property type="molecule type" value="Genomic_DNA"/>
</dbReference>
<dbReference type="RefSeq" id="XP_570934.1">
    <property type="nucleotide sequence ID" value="XM_570934.1"/>
</dbReference>
<dbReference type="SMR" id="P0CP96"/>
<dbReference type="STRING" id="214684.P0CP96"/>
<dbReference type="PaxDb" id="214684-P0CP96"/>
<dbReference type="EnsemblFungi" id="AAW43627">
    <property type="protein sequence ID" value="AAW43627"/>
    <property type="gene ID" value="CNE02370"/>
</dbReference>
<dbReference type="GeneID" id="3257892"/>
<dbReference type="KEGG" id="cne:CNE02370"/>
<dbReference type="VEuPathDB" id="FungiDB:CNE02370"/>
<dbReference type="eggNOG" id="KOG0549">
    <property type="taxonomic scope" value="Eukaryota"/>
</dbReference>
<dbReference type="HOGENOM" id="CLU_013615_8_2_1"/>
<dbReference type="InParanoid" id="P0CP96"/>
<dbReference type="OMA" id="VHMHYTG"/>
<dbReference type="OrthoDB" id="1902587at2759"/>
<dbReference type="Proteomes" id="UP000002149">
    <property type="component" value="Chromosome 5"/>
</dbReference>
<dbReference type="GO" id="GO:0005783">
    <property type="term" value="C:endoplasmic reticulum"/>
    <property type="evidence" value="ECO:0007669"/>
    <property type="project" value="UniProtKB-SubCell"/>
</dbReference>
<dbReference type="GO" id="GO:0003755">
    <property type="term" value="F:peptidyl-prolyl cis-trans isomerase activity"/>
    <property type="evidence" value="ECO:0000318"/>
    <property type="project" value="GO_Central"/>
</dbReference>
<dbReference type="GO" id="GO:0061077">
    <property type="term" value="P:chaperone-mediated protein folding"/>
    <property type="evidence" value="ECO:0007669"/>
    <property type="project" value="InterPro"/>
</dbReference>
<dbReference type="FunFam" id="3.10.50.40:FF:000006">
    <property type="entry name" value="Peptidyl-prolyl cis-trans isomerase"/>
    <property type="match status" value="1"/>
</dbReference>
<dbReference type="Gene3D" id="3.10.50.40">
    <property type="match status" value="1"/>
</dbReference>
<dbReference type="InterPro" id="IPR044609">
    <property type="entry name" value="FKBP2/11"/>
</dbReference>
<dbReference type="InterPro" id="IPR046357">
    <property type="entry name" value="PPIase_dom_sf"/>
</dbReference>
<dbReference type="InterPro" id="IPR001179">
    <property type="entry name" value="PPIase_FKBP_dom"/>
</dbReference>
<dbReference type="PANTHER" id="PTHR45779">
    <property type="entry name" value="PEPTIDYLPROLYL ISOMERASE"/>
    <property type="match status" value="1"/>
</dbReference>
<dbReference type="PANTHER" id="PTHR45779:SF7">
    <property type="entry name" value="PEPTIDYLPROLYL ISOMERASE"/>
    <property type="match status" value="1"/>
</dbReference>
<dbReference type="Pfam" id="PF00254">
    <property type="entry name" value="FKBP_C"/>
    <property type="match status" value="1"/>
</dbReference>
<dbReference type="SUPFAM" id="SSF54534">
    <property type="entry name" value="FKBP-like"/>
    <property type="match status" value="1"/>
</dbReference>
<dbReference type="PROSITE" id="PS50059">
    <property type="entry name" value="FKBP_PPIASE"/>
    <property type="match status" value="1"/>
</dbReference>
<sequence length="141" mass="15713">MYHPKALIIALLFSLSLILAAKSAEQLQIGVKYVPEECPVKSRKGDRLSMHYTGTLAKDGSKFDSSLDRNRPFEFTLGAGQVIKGWDQGLLDMCISEKRKLTIPSHLAYGERGHPPVIPPQSTLVFEVELLGIKNRHVDEL</sequence>
<feature type="signal peptide" evidence="2">
    <location>
        <begin position="1"/>
        <end position="23"/>
    </location>
</feature>
<feature type="chain" id="PRO_0000233066" description="FK506-binding protein 2">
    <location>
        <begin position="24"/>
        <end position="141"/>
    </location>
</feature>
<feature type="domain" description="PPIase FKBP-type" evidence="3">
    <location>
        <begin position="45"/>
        <end position="134"/>
    </location>
</feature>
<evidence type="ECO:0000250" key="1"/>
<evidence type="ECO:0000255" key="2"/>
<evidence type="ECO:0000255" key="3">
    <source>
        <dbReference type="PROSITE-ProRule" id="PRU00277"/>
    </source>
</evidence>
<evidence type="ECO:0000305" key="4"/>
<reference key="1">
    <citation type="journal article" date="2005" name="Science">
        <title>The genome of the basidiomycetous yeast and human pathogen Cryptococcus neoformans.</title>
        <authorList>
            <person name="Loftus B.J."/>
            <person name="Fung E."/>
            <person name="Roncaglia P."/>
            <person name="Rowley D."/>
            <person name="Amedeo P."/>
            <person name="Bruno D."/>
            <person name="Vamathevan J."/>
            <person name="Miranda M."/>
            <person name="Anderson I.J."/>
            <person name="Fraser J.A."/>
            <person name="Allen J.E."/>
            <person name="Bosdet I.E."/>
            <person name="Brent M.R."/>
            <person name="Chiu R."/>
            <person name="Doering T.L."/>
            <person name="Donlin M.J."/>
            <person name="D'Souza C.A."/>
            <person name="Fox D.S."/>
            <person name="Grinberg V."/>
            <person name="Fu J."/>
            <person name="Fukushima M."/>
            <person name="Haas B.J."/>
            <person name="Huang J.C."/>
            <person name="Janbon G."/>
            <person name="Jones S.J.M."/>
            <person name="Koo H.L."/>
            <person name="Krzywinski M.I."/>
            <person name="Kwon-Chung K.J."/>
            <person name="Lengeler K.B."/>
            <person name="Maiti R."/>
            <person name="Marra M.A."/>
            <person name="Marra R.E."/>
            <person name="Mathewson C.A."/>
            <person name="Mitchell T.G."/>
            <person name="Pertea M."/>
            <person name="Riggs F.R."/>
            <person name="Salzberg S.L."/>
            <person name="Schein J.E."/>
            <person name="Shvartsbeyn A."/>
            <person name="Shin H."/>
            <person name="Shumway M."/>
            <person name="Specht C.A."/>
            <person name="Suh B.B."/>
            <person name="Tenney A."/>
            <person name="Utterback T.R."/>
            <person name="Wickes B.L."/>
            <person name="Wortman J.R."/>
            <person name="Wye N.H."/>
            <person name="Kronstad J.W."/>
            <person name="Lodge J.K."/>
            <person name="Heitman J."/>
            <person name="Davis R.W."/>
            <person name="Fraser C.M."/>
            <person name="Hyman R.W."/>
        </authorList>
    </citation>
    <scope>NUCLEOTIDE SEQUENCE [LARGE SCALE GENOMIC DNA]</scope>
    <source>
        <strain>JEC21 / ATCC MYA-565</strain>
    </source>
</reference>
<accession>P0CP96</accession>
<accession>Q55SE5</accession>
<accession>Q5KGT9</accession>
<name>FKBP2_CRYNJ</name>